<proteinExistence type="evidence at protein level"/>
<protein>
    <recommendedName>
        <fullName>Zinc finger protein 597</fullName>
    </recommendedName>
</protein>
<dbReference type="EMBL" id="AK057633">
    <property type="protein sequence ID" value="BAB71538.1"/>
    <property type="molecule type" value="mRNA"/>
</dbReference>
<dbReference type="EMBL" id="BC029899">
    <property type="protein sequence ID" value="AAH29899.1"/>
    <property type="molecule type" value="mRNA"/>
</dbReference>
<dbReference type="CCDS" id="CCDS10505.1"/>
<dbReference type="RefSeq" id="NP_689670.1">
    <property type="nucleotide sequence ID" value="NM_152457.3"/>
</dbReference>
<dbReference type="SMR" id="Q96LX8"/>
<dbReference type="BioGRID" id="126986">
    <property type="interactions" value="26"/>
</dbReference>
<dbReference type="FunCoup" id="Q96LX8">
    <property type="interactions" value="514"/>
</dbReference>
<dbReference type="IntAct" id="Q96LX8">
    <property type="interactions" value="33"/>
</dbReference>
<dbReference type="STRING" id="9606.ENSP00000301744"/>
<dbReference type="iPTMnet" id="Q96LX8"/>
<dbReference type="PhosphoSitePlus" id="Q96LX8"/>
<dbReference type="BioMuta" id="ZNF597"/>
<dbReference type="DMDM" id="71153482"/>
<dbReference type="jPOST" id="Q96LX8"/>
<dbReference type="MassIVE" id="Q96LX8"/>
<dbReference type="PaxDb" id="9606-ENSP00000301744"/>
<dbReference type="PeptideAtlas" id="Q96LX8"/>
<dbReference type="ProteomicsDB" id="77266"/>
<dbReference type="Antibodypedia" id="819">
    <property type="antibodies" value="102 antibodies from 24 providers"/>
</dbReference>
<dbReference type="DNASU" id="146434"/>
<dbReference type="Ensembl" id="ENST00000301744.7">
    <property type="protein sequence ID" value="ENSP00000301744.4"/>
    <property type="gene ID" value="ENSG00000167981.7"/>
</dbReference>
<dbReference type="GeneID" id="146434"/>
<dbReference type="KEGG" id="hsa:146434"/>
<dbReference type="MANE-Select" id="ENST00000301744.7">
    <property type="protein sequence ID" value="ENSP00000301744.4"/>
    <property type="RefSeq nucleotide sequence ID" value="NM_152457.3"/>
    <property type="RefSeq protein sequence ID" value="NP_689670.1"/>
</dbReference>
<dbReference type="UCSC" id="uc002cvd.4">
    <property type="organism name" value="human"/>
</dbReference>
<dbReference type="AGR" id="HGNC:26573"/>
<dbReference type="CTD" id="146434"/>
<dbReference type="DisGeNET" id="146434"/>
<dbReference type="GeneCards" id="ZNF597"/>
<dbReference type="HGNC" id="HGNC:26573">
    <property type="gene designation" value="ZNF597"/>
</dbReference>
<dbReference type="HPA" id="ENSG00000167981">
    <property type="expression patterns" value="Low tissue specificity"/>
</dbReference>
<dbReference type="MIM" id="614685">
    <property type="type" value="gene"/>
</dbReference>
<dbReference type="neXtProt" id="NX_Q96LX8"/>
<dbReference type="OpenTargets" id="ENSG00000167981"/>
<dbReference type="PharmGKB" id="PA134935893"/>
<dbReference type="VEuPathDB" id="HostDB:ENSG00000167981"/>
<dbReference type="eggNOG" id="KOG1721">
    <property type="taxonomic scope" value="Eukaryota"/>
</dbReference>
<dbReference type="GeneTree" id="ENSGT00940000162263"/>
<dbReference type="HOGENOM" id="CLU_002678_0_7_1"/>
<dbReference type="InParanoid" id="Q96LX8"/>
<dbReference type="OMA" id="ILDFPWE"/>
<dbReference type="OrthoDB" id="8117402at2759"/>
<dbReference type="PAN-GO" id="Q96LX8">
    <property type="GO annotations" value="4 GO annotations based on evolutionary models"/>
</dbReference>
<dbReference type="PhylomeDB" id="Q96LX8"/>
<dbReference type="TreeFam" id="TF342316"/>
<dbReference type="PathwayCommons" id="Q96LX8"/>
<dbReference type="Reactome" id="R-HSA-212436">
    <property type="pathway name" value="Generic Transcription Pathway"/>
</dbReference>
<dbReference type="SignaLink" id="Q96LX8"/>
<dbReference type="BioGRID-ORCS" id="146434">
    <property type="hits" value="14 hits in 1167 CRISPR screens"/>
</dbReference>
<dbReference type="ChiTaRS" id="ZNF597">
    <property type="organism name" value="human"/>
</dbReference>
<dbReference type="GenomeRNAi" id="146434"/>
<dbReference type="Pharos" id="Q96LX8">
    <property type="development level" value="Tbio"/>
</dbReference>
<dbReference type="PRO" id="PR:Q96LX8"/>
<dbReference type="Proteomes" id="UP000005640">
    <property type="component" value="Chromosome 16"/>
</dbReference>
<dbReference type="RNAct" id="Q96LX8">
    <property type="molecule type" value="protein"/>
</dbReference>
<dbReference type="Bgee" id="ENSG00000167981">
    <property type="expression patterns" value="Expressed in secondary oocyte and 117 other cell types or tissues"/>
</dbReference>
<dbReference type="GO" id="GO:0005634">
    <property type="term" value="C:nucleus"/>
    <property type="evidence" value="ECO:0000318"/>
    <property type="project" value="GO_Central"/>
</dbReference>
<dbReference type="GO" id="GO:0001228">
    <property type="term" value="F:DNA-binding transcription activator activity, RNA polymerase II-specific"/>
    <property type="evidence" value="ECO:0000318"/>
    <property type="project" value="GO_Central"/>
</dbReference>
<dbReference type="GO" id="GO:0000978">
    <property type="term" value="F:RNA polymerase II cis-regulatory region sequence-specific DNA binding"/>
    <property type="evidence" value="ECO:0000318"/>
    <property type="project" value="GO_Central"/>
</dbReference>
<dbReference type="GO" id="GO:1990837">
    <property type="term" value="F:sequence-specific double-stranded DNA binding"/>
    <property type="evidence" value="ECO:0000314"/>
    <property type="project" value="ARUK-UCL"/>
</dbReference>
<dbReference type="GO" id="GO:0008270">
    <property type="term" value="F:zinc ion binding"/>
    <property type="evidence" value="ECO:0007669"/>
    <property type="project" value="UniProtKB-KW"/>
</dbReference>
<dbReference type="GO" id="GO:0006357">
    <property type="term" value="P:regulation of transcription by RNA polymerase II"/>
    <property type="evidence" value="ECO:0000318"/>
    <property type="project" value="GO_Central"/>
</dbReference>
<dbReference type="CDD" id="cd07765">
    <property type="entry name" value="KRAB_A-box"/>
    <property type="match status" value="1"/>
</dbReference>
<dbReference type="FunFam" id="3.30.160.60:FF:000895">
    <property type="entry name" value="Zinc finger protein 597"/>
    <property type="match status" value="1"/>
</dbReference>
<dbReference type="FunFam" id="3.30.160.60:FF:001014">
    <property type="entry name" value="Zinc finger protein 597"/>
    <property type="match status" value="1"/>
</dbReference>
<dbReference type="FunFam" id="3.30.160.60:FF:002285">
    <property type="entry name" value="Zinc finger protein 597"/>
    <property type="match status" value="1"/>
</dbReference>
<dbReference type="FunFam" id="3.30.160.60:FF:000609">
    <property type="entry name" value="zinc finger protein 621"/>
    <property type="match status" value="2"/>
</dbReference>
<dbReference type="FunFam" id="3.30.160.60:FF:001266">
    <property type="entry name" value="Zinc finger protein 662"/>
    <property type="match status" value="1"/>
</dbReference>
<dbReference type="FunFam" id="3.30.160.60:FF:000951">
    <property type="entry name" value="Zinc finger protein 8"/>
    <property type="match status" value="1"/>
</dbReference>
<dbReference type="Gene3D" id="6.10.140.140">
    <property type="match status" value="1"/>
</dbReference>
<dbReference type="Gene3D" id="3.30.160.60">
    <property type="entry name" value="Classic Zinc Finger"/>
    <property type="match status" value="7"/>
</dbReference>
<dbReference type="InterPro" id="IPR001909">
    <property type="entry name" value="KRAB"/>
</dbReference>
<dbReference type="InterPro" id="IPR036051">
    <property type="entry name" value="KRAB_dom_sf"/>
</dbReference>
<dbReference type="InterPro" id="IPR036236">
    <property type="entry name" value="Znf_C2H2_sf"/>
</dbReference>
<dbReference type="InterPro" id="IPR013087">
    <property type="entry name" value="Znf_C2H2_type"/>
</dbReference>
<dbReference type="PANTHER" id="PTHR24381">
    <property type="entry name" value="ZINC FINGER PROTEIN"/>
    <property type="match status" value="1"/>
</dbReference>
<dbReference type="PANTHER" id="PTHR24381:SF248">
    <property type="entry name" value="ZINC FINGER PROTEIN 597"/>
    <property type="match status" value="1"/>
</dbReference>
<dbReference type="Pfam" id="PF01352">
    <property type="entry name" value="KRAB"/>
    <property type="match status" value="1"/>
</dbReference>
<dbReference type="Pfam" id="PF00096">
    <property type="entry name" value="zf-C2H2"/>
    <property type="match status" value="4"/>
</dbReference>
<dbReference type="SMART" id="SM00349">
    <property type="entry name" value="KRAB"/>
    <property type="match status" value="1"/>
</dbReference>
<dbReference type="SMART" id="SM00355">
    <property type="entry name" value="ZnF_C2H2"/>
    <property type="match status" value="7"/>
</dbReference>
<dbReference type="SUPFAM" id="SSF57667">
    <property type="entry name" value="beta-beta-alpha zinc fingers"/>
    <property type="match status" value="5"/>
</dbReference>
<dbReference type="SUPFAM" id="SSF109640">
    <property type="entry name" value="KRAB domain (Kruppel-associated box)"/>
    <property type="match status" value="1"/>
</dbReference>
<dbReference type="PROSITE" id="PS00028">
    <property type="entry name" value="ZINC_FINGER_C2H2_1"/>
    <property type="match status" value="7"/>
</dbReference>
<dbReference type="PROSITE" id="PS50157">
    <property type="entry name" value="ZINC_FINGER_C2H2_2"/>
    <property type="match status" value="7"/>
</dbReference>
<gene>
    <name type="primary">ZNF597</name>
</gene>
<organism>
    <name type="scientific">Homo sapiens</name>
    <name type="common">Human</name>
    <dbReference type="NCBI Taxonomy" id="9606"/>
    <lineage>
        <taxon>Eukaryota</taxon>
        <taxon>Metazoa</taxon>
        <taxon>Chordata</taxon>
        <taxon>Craniata</taxon>
        <taxon>Vertebrata</taxon>
        <taxon>Euteleostomi</taxon>
        <taxon>Mammalia</taxon>
        <taxon>Eutheria</taxon>
        <taxon>Euarchontoglires</taxon>
        <taxon>Primates</taxon>
        <taxon>Haplorrhini</taxon>
        <taxon>Catarrhini</taxon>
        <taxon>Hominidae</taxon>
        <taxon>Homo</taxon>
    </lineage>
</organism>
<reference key="1">
    <citation type="journal article" date="2004" name="Nat. Genet.">
        <title>Complete sequencing and characterization of 21,243 full-length human cDNAs.</title>
        <authorList>
            <person name="Ota T."/>
            <person name="Suzuki Y."/>
            <person name="Nishikawa T."/>
            <person name="Otsuki T."/>
            <person name="Sugiyama T."/>
            <person name="Irie R."/>
            <person name="Wakamatsu A."/>
            <person name="Hayashi K."/>
            <person name="Sato H."/>
            <person name="Nagai K."/>
            <person name="Kimura K."/>
            <person name="Makita H."/>
            <person name="Sekine M."/>
            <person name="Obayashi M."/>
            <person name="Nishi T."/>
            <person name="Shibahara T."/>
            <person name="Tanaka T."/>
            <person name="Ishii S."/>
            <person name="Yamamoto J."/>
            <person name="Saito K."/>
            <person name="Kawai Y."/>
            <person name="Isono Y."/>
            <person name="Nakamura Y."/>
            <person name="Nagahari K."/>
            <person name="Murakami K."/>
            <person name="Yasuda T."/>
            <person name="Iwayanagi T."/>
            <person name="Wagatsuma M."/>
            <person name="Shiratori A."/>
            <person name="Sudo H."/>
            <person name="Hosoiri T."/>
            <person name="Kaku Y."/>
            <person name="Kodaira H."/>
            <person name="Kondo H."/>
            <person name="Sugawara M."/>
            <person name="Takahashi M."/>
            <person name="Kanda K."/>
            <person name="Yokoi T."/>
            <person name="Furuya T."/>
            <person name="Kikkawa E."/>
            <person name="Omura Y."/>
            <person name="Abe K."/>
            <person name="Kamihara K."/>
            <person name="Katsuta N."/>
            <person name="Sato K."/>
            <person name="Tanikawa M."/>
            <person name="Yamazaki M."/>
            <person name="Ninomiya K."/>
            <person name="Ishibashi T."/>
            <person name="Yamashita H."/>
            <person name="Murakawa K."/>
            <person name="Fujimori K."/>
            <person name="Tanai H."/>
            <person name="Kimata M."/>
            <person name="Watanabe M."/>
            <person name="Hiraoka S."/>
            <person name="Chiba Y."/>
            <person name="Ishida S."/>
            <person name="Ono Y."/>
            <person name="Takiguchi S."/>
            <person name="Watanabe S."/>
            <person name="Yosida M."/>
            <person name="Hotuta T."/>
            <person name="Kusano J."/>
            <person name="Kanehori K."/>
            <person name="Takahashi-Fujii A."/>
            <person name="Hara H."/>
            <person name="Tanase T.-O."/>
            <person name="Nomura Y."/>
            <person name="Togiya S."/>
            <person name="Komai F."/>
            <person name="Hara R."/>
            <person name="Takeuchi K."/>
            <person name="Arita M."/>
            <person name="Imose N."/>
            <person name="Musashino K."/>
            <person name="Yuuki H."/>
            <person name="Oshima A."/>
            <person name="Sasaki N."/>
            <person name="Aotsuka S."/>
            <person name="Yoshikawa Y."/>
            <person name="Matsunawa H."/>
            <person name="Ichihara T."/>
            <person name="Shiohata N."/>
            <person name="Sano S."/>
            <person name="Moriya S."/>
            <person name="Momiyama H."/>
            <person name="Satoh N."/>
            <person name="Takami S."/>
            <person name="Terashima Y."/>
            <person name="Suzuki O."/>
            <person name="Nakagawa S."/>
            <person name="Senoh A."/>
            <person name="Mizoguchi H."/>
            <person name="Goto Y."/>
            <person name="Shimizu F."/>
            <person name="Wakebe H."/>
            <person name="Hishigaki H."/>
            <person name="Watanabe T."/>
            <person name="Sugiyama A."/>
            <person name="Takemoto M."/>
            <person name="Kawakami B."/>
            <person name="Yamazaki M."/>
            <person name="Watanabe K."/>
            <person name="Kumagai A."/>
            <person name="Itakura S."/>
            <person name="Fukuzumi Y."/>
            <person name="Fujimori Y."/>
            <person name="Komiyama M."/>
            <person name="Tashiro H."/>
            <person name="Tanigami A."/>
            <person name="Fujiwara T."/>
            <person name="Ono T."/>
            <person name="Yamada K."/>
            <person name="Fujii Y."/>
            <person name="Ozaki K."/>
            <person name="Hirao M."/>
            <person name="Ohmori Y."/>
            <person name="Kawabata A."/>
            <person name="Hikiji T."/>
            <person name="Kobatake N."/>
            <person name="Inagaki H."/>
            <person name="Ikema Y."/>
            <person name="Okamoto S."/>
            <person name="Okitani R."/>
            <person name="Kawakami T."/>
            <person name="Noguchi S."/>
            <person name="Itoh T."/>
            <person name="Shigeta K."/>
            <person name="Senba T."/>
            <person name="Matsumura K."/>
            <person name="Nakajima Y."/>
            <person name="Mizuno T."/>
            <person name="Morinaga M."/>
            <person name="Sasaki M."/>
            <person name="Togashi T."/>
            <person name="Oyama M."/>
            <person name="Hata H."/>
            <person name="Watanabe M."/>
            <person name="Komatsu T."/>
            <person name="Mizushima-Sugano J."/>
            <person name="Satoh T."/>
            <person name="Shirai Y."/>
            <person name="Takahashi Y."/>
            <person name="Nakagawa K."/>
            <person name="Okumura K."/>
            <person name="Nagase T."/>
            <person name="Nomura N."/>
            <person name="Kikuchi H."/>
            <person name="Masuho Y."/>
            <person name="Yamashita R."/>
            <person name="Nakai K."/>
            <person name="Yada T."/>
            <person name="Nakamura Y."/>
            <person name="Ohara O."/>
            <person name="Isogai T."/>
            <person name="Sugano S."/>
        </authorList>
    </citation>
    <scope>NUCLEOTIDE SEQUENCE [LARGE SCALE MRNA]</scope>
    <source>
        <tissue>Trachea</tissue>
    </source>
</reference>
<reference key="2">
    <citation type="journal article" date="2004" name="Genome Res.">
        <title>The status, quality, and expansion of the NIH full-length cDNA project: the Mammalian Gene Collection (MGC).</title>
        <authorList>
            <consortium name="The MGC Project Team"/>
        </authorList>
    </citation>
    <scope>NUCLEOTIDE SEQUENCE [LARGE SCALE MRNA]</scope>
    <source>
        <tissue>Brain</tissue>
    </source>
</reference>
<reference key="3">
    <citation type="journal article" date="2006" name="Genome Res.">
        <title>Analysis of allelic differential expression in human white blood cells.</title>
        <authorList>
            <person name="Pant P.V."/>
            <person name="Tao H."/>
            <person name="Beilharz E.J."/>
            <person name="Ballinger D.G."/>
            <person name="Cox D.R."/>
            <person name="Frazer K.A."/>
        </authorList>
    </citation>
    <scope>IMPRINTING</scope>
    <scope>INDUCTION</scope>
</reference>
<reference key="4">
    <citation type="journal article" date="2011" name="Hum. Mol. Genet.">
        <title>Methylation screening of reciprocal genome-wide UPDs identifies novel human-specific imprinted genes.</title>
        <authorList>
            <person name="Nakabayashi K."/>
            <person name="Trujillo A.M."/>
            <person name="Tayama C."/>
            <person name="Camprubi C."/>
            <person name="Yoshida W."/>
            <person name="Lapunzina P."/>
            <person name="Sanchez A."/>
            <person name="Soejima H."/>
            <person name="Aburatani H."/>
            <person name="Nagae G."/>
            <person name="Ogata T."/>
            <person name="Hata K."/>
            <person name="Monk D."/>
        </authorList>
    </citation>
    <scope>IMPRINTING</scope>
    <scope>INDUCTION</scope>
</reference>
<reference key="5">
    <citation type="journal article" date="2017" name="Nat. Struct. Mol. Biol.">
        <title>Site-specific mapping of the human SUMO proteome reveals co-modification with phosphorylation.</title>
        <authorList>
            <person name="Hendriks I.A."/>
            <person name="Lyon D."/>
            <person name="Young C."/>
            <person name="Jensen L.J."/>
            <person name="Vertegaal A.C."/>
            <person name="Nielsen M.L."/>
        </authorList>
    </citation>
    <scope>SUMOYLATION [LARGE SCALE ANALYSIS] AT LYS-300</scope>
    <scope>IDENTIFICATION BY MASS SPECTROMETRY [LARGE SCALE ANALYSIS]</scope>
</reference>
<accession>Q96LX8</accession>
<comment type="function">
    <text>May be involved in transcriptional regulation.</text>
</comment>
<comment type="interaction">
    <interactant intactId="EBI-9091553">
        <id>Q96LX8</id>
    </interactant>
    <interactant intactId="EBI-718729">
        <id>P55212</id>
        <label>CASP6</label>
    </interactant>
    <organismsDiffer>false</organismsDiffer>
    <experiments>3</experiments>
</comment>
<comment type="interaction">
    <interactant intactId="EBI-9091553">
        <id>Q96LX8</id>
    </interactant>
    <interactant intactId="EBI-10292696">
        <id>Q96Q77</id>
        <label>CIB3</label>
    </interactant>
    <organismsDiffer>false</organismsDiffer>
    <experiments>3</experiments>
</comment>
<comment type="interaction">
    <interactant intactId="EBI-9091553">
        <id>Q96LX8</id>
    </interactant>
    <interactant intactId="EBI-10976677">
        <id>G5E9A7</id>
        <label>DMWD</label>
    </interactant>
    <organismsDiffer>false</organismsDiffer>
    <experiments>3</experiments>
</comment>
<comment type="interaction">
    <interactant intactId="EBI-9091553">
        <id>Q96LX8</id>
    </interactant>
    <interactant intactId="EBI-448378">
        <id>Q9NWZ3</id>
        <label>IRAK4</label>
    </interactant>
    <organismsDiffer>false</organismsDiffer>
    <experiments>3</experiments>
</comment>
<comment type="interaction">
    <interactant intactId="EBI-9091553">
        <id>Q96LX8</id>
    </interactant>
    <interactant intactId="EBI-21591415">
        <id>P13473-2</id>
        <label>LAMP2</label>
    </interactant>
    <organismsDiffer>false</organismsDiffer>
    <experiments>3</experiments>
</comment>
<comment type="interaction">
    <interactant intactId="EBI-9091553">
        <id>Q96LX8</id>
    </interactant>
    <interactant intactId="EBI-351935">
        <id>P02545</id>
        <label>LMNA</label>
    </interactant>
    <organismsDiffer>false</organismsDiffer>
    <experiments>3</experiments>
</comment>
<comment type="interaction">
    <interactant intactId="EBI-9091553">
        <id>Q96LX8</id>
    </interactant>
    <interactant intactId="EBI-748974">
        <id>Q96CV9</id>
        <label>OPTN</label>
    </interactant>
    <organismsDiffer>false</organismsDiffer>
    <experiments>3</experiments>
</comment>
<comment type="interaction">
    <interactant intactId="EBI-9091553">
        <id>Q96LX8</id>
    </interactant>
    <interactant intactId="EBI-5280197">
        <id>O75400-2</id>
        <label>PRPF40A</label>
    </interactant>
    <organismsDiffer>false</organismsDiffer>
    <experiments>3</experiments>
</comment>
<comment type="interaction">
    <interactant intactId="EBI-9091553">
        <id>Q96LX8</id>
    </interactant>
    <interactant intactId="EBI-286642">
        <id>P62826</id>
        <label>RAN</label>
    </interactant>
    <organismsDiffer>false</organismsDiffer>
    <experiments>3</experiments>
</comment>
<comment type="interaction">
    <interactant intactId="EBI-9091553">
        <id>Q96LX8</id>
    </interactant>
    <interactant intactId="EBI-5235340">
        <id>Q7Z699</id>
        <label>SPRED1</label>
    </interactant>
    <organismsDiffer>false</organismsDiffer>
    <experiments>3</experiments>
</comment>
<comment type="interaction">
    <interactant intactId="EBI-9091553">
        <id>Q96LX8</id>
    </interactant>
    <interactant intactId="EBI-745392">
        <id>Q9BSW7</id>
        <label>SYT17</label>
    </interactant>
    <organismsDiffer>false</organismsDiffer>
    <experiments>3</experiments>
</comment>
<comment type="subcellular location">
    <subcellularLocation>
        <location evidence="4">Nucleus</location>
    </subcellularLocation>
</comment>
<comment type="induction">
    <text evidence="2 3">Imprinted. Promoter methylation of the paternal allele may restrict expression to the maternal allele in leukocytes.</text>
</comment>
<comment type="similarity">
    <text evidence="4">Belongs to the krueppel C2H2-type zinc-finger protein family.</text>
</comment>
<feature type="chain" id="PRO_0000047687" description="Zinc finger protein 597">
    <location>
        <begin position="1"/>
        <end position="424"/>
    </location>
</feature>
<feature type="domain" description="KRAB">
    <location>
        <begin position="14"/>
        <end position="88"/>
    </location>
</feature>
<feature type="zinc finger region" description="C2H2-type 1" evidence="1">
    <location>
        <begin position="156"/>
        <end position="178"/>
    </location>
</feature>
<feature type="zinc finger region" description="C2H2-type 2" evidence="1">
    <location>
        <begin position="184"/>
        <end position="206"/>
    </location>
</feature>
<feature type="zinc finger region" description="C2H2-type 3" evidence="1">
    <location>
        <begin position="212"/>
        <end position="234"/>
    </location>
</feature>
<feature type="zinc finger region" description="C2H2-type 4" evidence="1">
    <location>
        <begin position="240"/>
        <end position="262"/>
    </location>
</feature>
<feature type="zinc finger region" description="C2H2-type 5" evidence="1">
    <location>
        <begin position="341"/>
        <end position="363"/>
    </location>
</feature>
<feature type="zinc finger region" description="C2H2-type 6" evidence="1">
    <location>
        <begin position="369"/>
        <end position="391"/>
    </location>
</feature>
<feature type="zinc finger region" description="C2H2-type 7" evidence="1">
    <location>
        <begin position="397"/>
        <end position="419"/>
    </location>
</feature>
<feature type="cross-link" description="Glycyl lysine isopeptide (Lys-Gly) (interchain with G-Cter in SUMO2)" evidence="5">
    <location>
        <position position="300"/>
    </location>
</feature>
<feature type="sequence variant" id="VAR_033581" description="In dbSNP:rs2270493.">
    <original>T</original>
    <variation>S</variation>
    <location>
        <position position="30"/>
    </location>
</feature>
<sequence>MASMPPTPEAQGPILFEDLAVYFSQEECVTLHPAQRSLSKDGTKESLEDAALMGEEGKPEINQQLSLESMELDELALEKYPIAAPLVPYPEKSSEDGVGNPEAKILSGTPTYKRRVISLLVTIENHTPLVELSEYLGTNTLSEILDSPWEGAKNVYKCPECDQNFSDHSYLVLHQKIHSGEKKHKCGDCGKIFNHRANLRTHRRIHTGEKPYKCAKCSASFRQHSHLSRHMNSHVKEKPYTCSICGRGFMWLPGLAQHQKSHSAENTYESTNCDKHFNEKPNLALPEETFVSGPQYQHTKCMKSFRQSLYPALSEKSHDEDSERCSDDGDNFFSFSKFKPLQCPDCDMTFPCFSELISHQNIHTEERPHKCKTCEESFALDSELACHQKSHMLAEPFKCTVCGKTFKSNLHLITHKRTHIKNTT</sequence>
<keyword id="KW-0238">DNA-binding</keyword>
<keyword id="KW-1017">Isopeptide bond</keyword>
<keyword id="KW-0479">Metal-binding</keyword>
<keyword id="KW-0539">Nucleus</keyword>
<keyword id="KW-1267">Proteomics identification</keyword>
<keyword id="KW-1185">Reference proteome</keyword>
<keyword id="KW-0677">Repeat</keyword>
<keyword id="KW-0804">Transcription</keyword>
<keyword id="KW-0805">Transcription regulation</keyword>
<keyword id="KW-0832">Ubl conjugation</keyword>
<keyword id="KW-0862">Zinc</keyword>
<keyword id="KW-0863">Zinc-finger</keyword>
<name>ZN597_HUMAN</name>
<evidence type="ECO:0000255" key="1">
    <source>
        <dbReference type="PROSITE-ProRule" id="PRU00042"/>
    </source>
</evidence>
<evidence type="ECO:0000269" key="2">
    <source>
    </source>
</evidence>
<evidence type="ECO:0000269" key="3">
    <source>
    </source>
</evidence>
<evidence type="ECO:0000305" key="4"/>
<evidence type="ECO:0007744" key="5">
    <source>
    </source>
</evidence>